<dbReference type="EMBL" id="CP001407">
    <property type="protein sequence ID" value="ACO27143.1"/>
    <property type="molecule type" value="Genomic_DNA"/>
</dbReference>
<dbReference type="RefSeq" id="WP_001123317.1">
    <property type="nucleotide sequence ID" value="NZ_CP009318.1"/>
</dbReference>
<dbReference type="SMR" id="C1ENC2"/>
<dbReference type="KEGG" id="bcx:BCA_3779"/>
<dbReference type="PATRIC" id="fig|572264.18.peg.3736"/>
<dbReference type="Proteomes" id="UP000002210">
    <property type="component" value="Chromosome"/>
</dbReference>
<dbReference type="GO" id="GO:0005886">
    <property type="term" value="C:plasma membrane"/>
    <property type="evidence" value="ECO:0007669"/>
    <property type="project" value="UniProtKB-SubCell"/>
</dbReference>
<dbReference type="HAMAP" id="MF_00363">
    <property type="entry name" value="UPF0154"/>
    <property type="match status" value="1"/>
</dbReference>
<dbReference type="InterPro" id="IPR005359">
    <property type="entry name" value="UPF0154"/>
</dbReference>
<dbReference type="NCBIfam" id="NF002503">
    <property type="entry name" value="PRK01844.1"/>
    <property type="match status" value="1"/>
</dbReference>
<dbReference type="Pfam" id="PF03672">
    <property type="entry name" value="UPF0154"/>
    <property type="match status" value="1"/>
</dbReference>
<keyword id="KW-1003">Cell membrane</keyword>
<keyword id="KW-0472">Membrane</keyword>
<keyword id="KW-0812">Transmembrane</keyword>
<keyword id="KW-1133">Transmembrane helix</keyword>
<organism>
    <name type="scientific">Bacillus cereus (strain 03BB102)</name>
    <dbReference type="NCBI Taxonomy" id="572264"/>
    <lineage>
        <taxon>Bacteria</taxon>
        <taxon>Bacillati</taxon>
        <taxon>Bacillota</taxon>
        <taxon>Bacilli</taxon>
        <taxon>Bacillales</taxon>
        <taxon>Bacillaceae</taxon>
        <taxon>Bacillus</taxon>
        <taxon>Bacillus cereus group</taxon>
    </lineage>
</organism>
<reference key="1">
    <citation type="submission" date="2009-02" db="EMBL/GenBank/DDBJ databases">
        <title>Genome sequence of Bacillus cereus 03BB102.</title>
        <authorList>
            <person name="Dodson R.J."/>
            <person name="Jackson P."/>
            <person name="Munk A.C."/>
            <person name="Brettin T."/>
            <person name="Bruce D."/>
            <person name="Detter C."/>
            <person name="Tapia R."/>
            <person name="Han C."/>
            <person name="Sutton G."/>
            <person name="Sims D."/>
        </authorList>
    </citation>
    <scope>NUCLEOTIDE SEQUENCE [LARGE SCALE GENOMIC DNA]</scope>
    <source>
        <strain>03BB102</strain>
    </source>
</reference>
<gene>
    <name type="ordered locus">BCA_3779</name>
</gene>
<comment type="subcellular location">
    <subcellularLocation>
        <location evidence="1">Cell membrane</location>
        <topology evidence="1">Single-pass membrane protein</topology>
    </subcellularLocation>
</comment>
<comment type="similarity">
    <text evidence="1">Belongs to the UPF0154 family.</text>
</comment>
<feature type="chain" id="PRO_1000197725" description="UPF0154 protein BCA_3779">
    <location>
        <begin position="1"/>
        <end position="73"/>
    </location>
</feature>
<feature type="transmembrane region" description="Helical" evidence="1">
    <location>
        <begin position="3"/>
        <end position="23"/>
    </location>
</feature>
<evidence type="ECO:0000255" key="1">
    <source>
        <dbReference type="HAMAP-Rule" id="MF_00363"/>
    </source>
</evidence>
<sequence>MPIWLGILVGVVALVAGVALGFFIARKYMMNYLQKNPPINEQMLKMMMMQMGQKPSQKKINQMMSAMNKQQMK</sequence>
<name>Y3779_BACC3</name>
<protein>
    <recommendedName>
        <fullName evidence="1">UPF0154 protein BCA_3779</fullName>
    </recommendedName>
</protein>
<proteinExistence type="inferred from homology"/>
<accession>C1ENC2</accession>